<accession>C1D5G5</accession>
<evidence type="ECO:0000255" key="1">
    <source>
        <dbReference type="HAMAP-Rule" id="MF_01416"/>
    </source>
</evidence>
<comment type="function">
    <text evidence="1">F(1)F(0) ATP synthase produces ATP from ADP in the presence of a proton or sodium gradient. F-type ATPases consist of two structural domains, F(1) containing the extramembraneous catalytic core and F(0) containing the membrane proton channel, linked together by a central stalk and a peripheral stalk. During catalysis, ATP synthesis in the catalytic domain of F(1) is coupled via a rotary mechanism of the central stalk subunits to proton translocation.</text>
</comment>
<comment type="function">
    <text evidence="1">This protein is part of the stalk that links CF(0) to CF(1). It either transmits conformational changes from CF(0) to CF(1) or is implicated in proton conduction.</text>
</comment>
<comment type="subunit">
    <text evidence="1">F-type ATPases have 2 components, F(1) - the catalytic core - and F(0) - the membrane proton channel. F(1) has five subunits: alpha(3), beta(3), gamma(1), delta(1), epsilon(1). F(0) has three main subunits: a(1), b(2) and c(10-14). The alpha and beta chains form an alternating ring which encloses part of the gamma chain. F(1) is attached to F(0) by a central stalk formed by the gamma and epsilon chains, while a peripheral stalk is formed by the delta and b chains.</text>
</comment>
<comment type="subcellular location">
    <subcellularLocation>
        <location evidence="1">Cell inner membrane</location>
        <topology evidence="1">Peripheral membrane protein</topology>
    </subcellularLocation>
</comment>
<comment type="similarity">
    <text evidence="1">Belongs to the ATPase delta chain family.</text>
</comment>
<reference key="1">
    <citation type="journal article" date="2009" name="PLoS Genet.">
        <title>The complete genome and proteome of Laribacter hongkongensis reveal potential mechanisms for adaptations to different temperatures and habitats.</title>
        <authorList>
            <person name="Woo P.C.Y."/>
            <person name="Lau S.K.P."/>
            <person name="Tse H."/>
            <person name="Teng J.L.L."/>
            <person name="Curreem S.O."/>
            <person name="Tsang A.K.L."/>
            <person name="Fan R.Y.Y."/>
            <person name="Wong G.K.M."/>
            <person name="Huang Y."/>
            <person name="Loman N.J."/>
            <person name="Snyder L.A.S."/>
            <person name="Cai J.J."/>
            <person name="Huang J.-D."/>
            <person name="Mak W."/>
            <person name="Pallen M.J."/>
            <person name="Lok S."/>
            <person name="Yuen K.-Y."/>
        </authorList>
    </citation>
    <scope>NUCLEOTIDE SEQUENCE [LARGE SCALE GENOMIC DNA]</scope>
    <source>
        <strain>HLHK9</strain>
    </source>
</reference>
<proteinExistence type="inferred from homology"/>
<keyword id="KW-0066">ATP synthesis</keyword>
<keyword id="KW-0997">Cell inner membrane</keyword>
<keyword id="KW-1003">Cell membrane</keyword>
<keyword id="KW-0139">CF(1)</keyword>
<keyword id="KW-0375">Hydrogen ion transport</keyword>
<keyword id="KW-0406">Ion transport</keyword>
<keyword id="KW-0472">Membrane</keyword>
<keyword id="KW-1185">Reference proteome</keyword>
<keyword id="KW-0813">Transport</keyword>
<dbReference type="EMBL" id="CP001154">
    <property type="protein sequence ID" value="ACO75982.1"/>
    <property type="molecule type" value="Genomic_DNA"/>
</dbReference>
<dbReference type="RefSeq" id="WP_012698445.1">
    <property type="nucleotide sequence ID" value="NC_012559.1"/>
</dbReference>
<dbReference type="SMR" id="C1D5G5"/>
<dbReference type="STRING" id="557598.LHK_03004"/>
<dbReference type="KEGG" id="lhk:LHK_03004"/>
<dbReference type="eggNOG" id="COG0712">
    <property type="taxonomic scope" value="Bacteria"/>
</dbReference>
<dbReference type="HOGENOM" id="CLU_085114_3_0_4"/>
<dbReference type="Proteomes" id="UP000002010">
    <property type="component" value="Chromosome"/>
</dbReference>
<dbReference type="GO" id="GO:0005886">
    <property type="term" value="C:plasma membrane"/>
    <property type="evidence" value="ECO:0007669"/>
    <property type="project" value="UniProtKB-SubCell"/>
</dbReference>
<dbReference type="GO" id="GO:0045259">
    <property type="term" value="C:proton-transporting ATP synthase complex"/>
    <property type="evidence" value="ECO:0007669"/>
    <property type="project" value="UniProtKB-KW"/>
</dbReference>
<dbReference type="GO" id="GO:0046933">
    <property type="term" value="F:proton-transporting ATP synthase activity, rotational mechanism"/>
    <property type="evidence" value="ECO:0007669"/>
    <property type="project" value="UniProtKB-UniRule"/>
</dbReference>
<dbReference type="Gene3D" id="1.10.520.20">
    <property type="entry name" value="N-terminal domain of the delta subunit of the F1F0-ATP synthase"/>
    <property type="match status" value="1"/>
</dbReference>
<dbReference type="HAMAP" id="MF_01416">
    <property type="entry name" value="ATP_synth_delta_bact"/>
    <property type="match status" value="1"/>
</dbReference>
<dbReference type="InterPro" id="IPR026015">
    <property type="entry name" value="ATP_synth_OSCP/delta_N_sf"/>
</dbReference>
<dbReference type="InterPro" id="IPR000711">
    <property type="entry name" value="ATPase_OSCP/dsu"/>
</dbReference>
<dbReference type="NCBIfam" id="TIGR01145">
    <property type="entry name" value="ATP_synt_delta"/>
    <property type="match status" value="1"/>
</dbReference>
<dbReference type="NCBIfam" id="NF004402">
    <property type="entry name" value="PRK05758.2-2"/>
    <property type="match status" value="1"/>
</dbReference>
<dbReference type="PANTHER" id="PTHR11910">
    <property type="entry name" value="ATP SYNTHASE DELTA CHAIN"/>
    <property type="match status" value="1"/>
</dbReference>
<dbReference type="Pfam" id="PF00213">
    <property type="entry name" value="OSCP"/>
    <property type="match status" value="1"/>
</dbReference>
<dbReference type="PRINTS" id="PR00125">
    <property type="entry name" value="ATPASEDELTA"/>
</dbReference>
<dbReference type="SUPFAM" id="SSF47928">
    <property type="entry name" value="N-terminal domain of the delta subunit of the F1F0-ATP synthase"/>
    <property type="match status" value="1"/>
</dbReference>
<feature type="chain" id="PRO_1000184738" description="ATP synthase subunit delta">
    <location>
        <begin position="1"/>
        <end position="178"/>
    </location>
</feature>
<gene>
    <name evidence="1" type="primary">atpH</name>
    <name type="ordered locus">LHK_03004</name>
</gene>
<sequence>MAELITVARPYAEAVFRLAKDEGRLAQWSEALAWLAASLAEPAVSAAVANPERTEAEVVTLLGGILGDKAGHEVRNLLEALAENHRLALLPAIAEQFEQLKQVEEGVLTADIASAYPLTEAQSAELAATLKAKYGKEIVLKASVDPSLIGGVRILVGDEVIDASVRGKLHTMAISLKS</sequence>
<organism>
    <name type="scientific">Laribacter hongkongensis (strain HLHK9)</name>
    <dbReference type="NCBI Taxonomy" id="557598"/>
    <lineage>
        <taxon>Bacteria</taxon>
        <taxon>Pseudomonadati</taxon>
        <taxon>Pseudomonadota</taxon>
        <taxon>Betaproteobacteria</taxon>
        <taxon>Neisseriales</taxon>
        <taxon>Aquaspirillaceae</taxon>
        <taxon>Laribacter</taxon>
    </lineage>
</organism>
<protein>
    <recommendedName>
        <fullName evidence="1">ATP synthase subunit delta</fullName>
    </recommendedName>
    <alternativeName>
        <fullName evidence="1">ATP synthase F(1) sector subunit delta</fullName>
    </alternativeName>
    <alternativeName>
        <fullName evidence="1">F-type ATPase subunit delta</fullName>
        <shortName evidence="1">F-ATPase subunit delta</shortName>
    </alternativeName>
</protein>
<name>ATPD_LARHH</name>